<comment type="function">
    <text evidence="1">May function as a transcriptional corepressor through its interaction with COPS2, negatively regulating the expression of genes involved in neuronal differentiation.</text>
</comment>
<comment type="subunit">
    <text evidence="2">Homodimer. Interacts with COPS2. Interacts with THOC7.</text>
</comment>
<comment type="subcellular location">
    <subcellularLocation>
        <location evidence="1">Cytoplasm</location>
    </subcellularLocation>
    <subcellularLocation>
        <location evidence="1">Nucleus</location>
    </subcellularLocation>
    <text evidence="1">Interaction with COPS2 may regulate localization to the nucleus.</text>
</comment>
<comment type="similarity">
    <text evidence="3">Belongs to the GTP cyclohydrolase I type 2/NIF3 family.</text>
</comment>
<dbReference type="EMBL" id="BC122596">
    <property type="protein sequence ID" value="AAI22597.1"/>
    <property type="molecule type" value="mRNA"/>
</dbReference>
<dbReference type="RefSeq" id="NP_001073718.1">
    <property type="nucleotide sequence ID" value="NM_001080249.2"/>
</dbReference>
<dbReference type="RefSeq" id="XP_005202674.1">
    <property type="nucleotide sequence ID" value="XM_005202617.5"/>
</dbReference>
<dbReference type="RefSeq" id="XP_024856112.1">
    <property type="nucleotide sequence ID" value="XM_025000344.2"/>
</dbReference>
<dbReference type="SMR" id="Q05B89"/>
<dbReference type="FunCoup" id="Q05B89">
    <property type="interactions" value="3361"/>
</dbReference>
<dbReference type="STRING" id="9913.ENSBTAP00000057237"/>
<dbReference type="PaxDb" id="9913-ENSBTAP00000024331"/>
<dbReference type="Ensembl" id="ENSBTAT00000024331.5">
    <property type="protein sequence ID" value="ENSBTAP00000024331.4"/>
    <property type="gene ID" value="ENSBTAG00000018282.6"/>
</dbReference>
<dbReference type="GeneID" id="509473"/>
<dbReference type="KEGG" id="bta:509473"/>
<dbReference type="CTD" id="60491"/>
<dbReference type="VEuPathDB" id="HostDB:ENSBTAG00000018282"/>
<dbReference type="VGNC" id="VGNC:32075">
    <property type="gene designation" value="NIF3L1"/>
</dbReference>
<dbReference type="eggNOG" id="KOG4131">
    <property type="taxonomic scope" value="Eukaryota"/>
</dbReference>
<dbReference type="GeneTree" id="ENSGT00390000003590"/>
<dbReference type="HOGENOM" id="CLU_037423_0_0_1"/>
<dbReference type="InParanoid" id="Q05B89"/>
<dbReference type="OMA" id="KYHEFFD"/>
<dbReference type="OrthoDB" id="3345469at2759"/>
<dbReference type="TreeFam" id="TF324125"/>
<dbReference type="Proteomes" id="UP000009136">
    <property type="component" value="Chromosome 2"/>
</dbReference>
<dbReference type="Bgee" id="ENSBTAG00000018282">
    <property type="expression patterns" value="Expressed in oocyte and 104 other cell types or tissues"/>
</dbReference>
<dbReference type="GO" id="GO:0005737">
    <property type="term" value="C:cytoplasm"/>
    <property type="evidence" value="ECO:0000250"/>
    <property type="project" value="UniProtKB"/>
</dbReference>
<dbReference type="GO" id="GO:0005739">
    <property type="term" value="C:mitochondrion"/>
    <property type="evidence" value="ECO:0000318"/>
    <property type="project" value="GO_Central"/>
</dbReference>
<dbReference type="GO" id="GO:0005634">
    <property type="term" value="C:nucleus"/>
    <property type="evidence" value="ECO:0000250"/>
    <property type="project" value="UniProtKB"/>
</dbReference>
<dbReference type="GO" id="GO:0000122">
    <property type="term" value="P:negative regulation of transcription by RNA polymerase II"/>
    <property type="evidence" value="ECO:0000250"/>
    <property type="project" value="UniProtKB"/>
</dbReference>
<dbReference type="GO" id="GO:0030182">
    <property type="term" value="P:neuron differentiation"/>
    <property type="evidence" value="ECO:0000250"/>
    <property type="project" value="UniProtKB"/>
</dbReference>
<dbReference type="FunFam" id="3.40.1390.30:FF:000001">
    <property type="entry name" value="GTP cyclohydrolase 1 type 2"/>
    <property type="match status" value="1"/>
</dbReference>
<dbReference type="FunFam" id="3.40.1390.30:FF:000004">
    <property type="entry name" value="NIF3-like protein 1"/>
    <property type="match status" value="1"/>
</dbReference>
<dbReference type="Gene3D" id="3.40.1390.30">
    <property type="entry name" value="NIF3 (NGG1p interacting factor 3)-like"/>
    <property type="match status" value="2"/>
</dbReference>
<dbReference type="InterPro" id="IPR002678">
    <property type="entry name" value="DUF34/NIF3"/>
</dbReference>
<dbReference type="InterPro" id="IPR017222">
    <property type="entry name" value="DUF34/NIF3_animal"/>
</dbReference>
<dbReference type="InterPro" id="IPR036069">
    <property type="entry name" value="DUF34/NIF3_sf"/>
</dbReference>
<dbReference type="NCBIfam" id="TIGR00486">
    <property type="entry name" value="YbgI_SA1388"/>
    <property type="match status" value="1"/>
</dbReference>
<dbReference type="PANTHER" id="PTHR13799">
    <property type="entry name" value="NGG1 INTERACTING FACTOR 3"/>
    <property type="match status" value="1"/>
</dbReference>
<dbReference type="PANTHER" id="PTHR13799:SF13">
    <property type="entry name" value="NIF3-LIKE PROTEIN 1"/>
    <property type="match status" value="1"/>
</dbReference>
<dbReference type="Pfam" id="PF01784">
    <property type="entry name" value="DUF34_NIF3"/>
    <property type="match status" value="1"/>
</dbReference>
<dbReference type="PIRSF" id="PIRSF037490">
    <property type="entry name" value="UCP037490_NIF3_euk"/>
    <property type="match status" value="1"/>
</dbReference>
<dbReference type="SUPFAM" id="SSF102705">
    <property type="entry name" value="NIF3 (NGG1p interacting factor 3)-like"/>
    <property type="match status" value="1"/>
</dbReference>
<evidence type="ECO:0000250" key="1">
    <source>
        <dbReference type="UniProtKB" id="Q9EQ80"/>
    </source>
</evidence>
<evidence type="ECO:0000250" key="2">
    <source>
        <dbReference type="UniProtKB" id="Q9GZT8"/>
    </source>
</evidence>
<evidence type="ECO:0000305" key="3"/>
<protein>
    <recommendedName>
        <fullName evidence="3">NIF3-like protein 1</fullName>
    </recommendedName>
</protein>
<organism>
    <name type="scientific">Bos taurus</name>
    <name type="common">Bovine</name>
    <dbReference type="NCBI Taxonomy" id="9913"/>
    <lineage>
        <taxon>Eukaryota</taxon>
        <taxon>Metazoa</taxon>
        <taxon>Chordata</taxon>
        <taxon>Craniata</taxon>
        <taxon>Vertebrata</taxon>
        <taxon>Euteleostomi</taxon>
        <taxon>Mammalia</taxon>
        <taxon>Eutheria</taxon>
        <taxon>Laurasiatheria</taxon>
        <taxon>Artiodactyla</taxon>
        <taxon>Ruminantia</taxon>
        <taxon>Pecora</taxon>
        <taxon>Bovidae</taxon>
        <taxon>Bovinae</taxon>
        <taxon>Bos</taxon>
    </lineage>
</organism>
<feature type="chain" id="PRO_0000330908" description="NIF3-like protein 1">
    <location>
        <begin position="1"/>
        <end position="377"/>
    </location>
</feature>
<feature type="region of interest" description="Mediates interaction with COPS2" evidence="1">
    <location>
        <begin position="244"/>
        <end position="377"/>
    </location>
</feature>
<feature type="modified residue" description="N6-acetyllysine" evidence="2">
    <location>
        <position position="109"/>
    </location>
</feature>
<feature type="modified residue" description="Phosphothreonine" evidence="1">
    <location>
        <position position="255"/>
    </location>
</feature>
<feature type="modified residue" description="Phosphoserine" evidence="1">
    <location>
        <position position="259"/>
    </location>
</feature>
<accession>Q05B89</accession>
<gene>
    <name evidence="2" type="primary">NIF3L1</name>
</gene>
<sequence length="377" mass="41906">MLSSRVRLVATTARLVHSLIYSSSRSFMDLKALLSSLNDFASLSFAESWDNVGLLVEPSPPHTVNTLFLTNDLTEEVMEEALQKKADLILSYHPPIFRPMKRITWKTWKERLVIRALENRVGIYSPHTAYDAAPQGVNNWLAKGLGVCTSRPIHPSKAPDYPTEGTHRVEFSVTHTQDPDKVISALKEIAGVSVTSFSARTDDEEQTRLSLNCTQQALMQVVAFLSQNRQFYQKTEILSLEKPLLLYTGMGRLCTLDESVSLETMIERIKSHLKLSHVRLALGIGKTLESPVKVVALCAGSGSSVLQGTDADLYLTGEMSHHDVLDAASQGISVILCEHSNTERGFLSDLRDMLDAHLENKINIILSETDRDPLHVI</sequence>
<reference key="1">
    <citation type="submission" date="2006-08" db="EMBL/GenBank/DDBJ databases">
        <authorList>
            <consortium name="NIH - Mammalian Gene Collection (MGC) project"/>
        </authorList>
    </citation>
    <scope>NUCLEOTIDE SEQUENCE [LARGE SCALE MRNA]</scope>
    <source>
        <strain>Hereford</strain>
        <tissue>Thalamus</tissue>
    </source>
</reference>
<name>NIF3L_BOVIN</name>
<proteinExistence type="evidence at transcript level"/>
<keyword id="KW-0007">Acetylation</keyword>
<keyword id="KW-0963">Cytoplasm</keyword>
<keyword id="KW-0539">Nucleus</keyword>
<keyword id="KW-0597">Phosphoprotein</keyword>
<keyword id="KW-1185">Reference proteome</keyword>